<gene>
    <name type="primary">HBB</name>
</gene>
<comment type="function">
    <text>Involved in oxygen transport from the lung to the various peripheral tissues.</text>
</comment>
<comment type="subunit">
    <text>Heterotetramer of two alpha chains and two beta chains.</text>
</comment>
<comment type="tissue specificity">
    <text>Red blood cells.</text>
</comment>
<comment type="similarity">
    <text evidence="1">Belongs to the globin family.</text>
</comment>
<protein>
    <recommendedName>
        <fullName>Hemoglobin subunit beta</fullName>
    </recommendedName>
    <alternativeName>
        <fullName>Beta-globin</fullName>
    </alternativeName>
    <alternativeName>
        <fullName>Hemoglobin beta chain</fullName>
    </alternativeName>
</protein>
<name>HBB_RHEAM</name>
<evidence type="ECO:0000255" key="1">
    <source>
        <dbReference type="PROSITE-ProRule" id="PRU00238"/>
    </source>
</evidence>
<accession>P02124</accession>
<sequence>VQWTAEEKQLITGLWGKVNVADCGAEALARLLIVYPWTQRFFASFGNLSSPTAILGNPMVRAHGKKVLTSFGDAVKNLDNIKNTFAQLSELHCDKLHVDPENFRLLGDILIIVLAAHFAKDFTPECQAAWQKLVRVVAHALARKYH</sequence>
<reference key="1">
    <citation type="journal article" date="1983" name="Hoppe-Seyler's Z. Physiol. Chem.">
        <title>Primary structures of the alpha and beta chains from the major hemoglobin component of the ostrich (Struthio camelus) and American rhea (Rhea americana) (Struthioformes). Aspects of respiratory physiology and taxonomy.</title>
        <authorList>
            <person name="Oberthur W."/>
            <person name="Braunitzer G."/>
            <person name="Baumann R."/>
            <person name="Wright P.G."/>
        </authorList>
    </citation>
    <scope>PROTEIN SEQUENCE</scope>
</reference>
<keyword id="KW-0903">Direct protein sequencing</keyword>
<keyword id="KW-0349">Heme</keyword>
<keyword id="KW-0408">Iron</keyword>
<keyword id="KW-0479">Metal-binding</keyword>
<keyword id="KW-0561">Oxygen transport</keyword>
<keyword id="KW-0813">Transport</keyword>
<organism>
    <name type="scientific">Rhea americana</name>
    <name type="common">Greater rhea</name>
    <name type="synonym">Common rhea</name>
    <dbReference type="NCBI Taxonomy" id="8797"/>
    <lineage>
        <taxon>Eukaryota</taxon>
        <taxon>Metazoa</taxon>
        <taxon>Chordata</taxon>
        <taxon>Craniata</taxon>
        <taxon>Vertebrata</taxon>
        <taxon>Euteleostomi</taxon>
        <taxon>Archelosauria</taxon>
        <taxon>Archosauria</taxon>
        <taxon>Dinosauria</taxon>
        <taxon>Saurischia</taxon>
        <taxon>Theropoda</taxon>
        <taxon>Coelurosauria</taxon>
        <taxon>Aves</taxon>
        <taxon>Palaeognathae</taxon>
        <taxon>Rheiformes</taxon>
        <taxon>Rheidae</taxon>
        <taxon>Rhea</taxon>
    </lineage>
</organism>
<dbReference type="PIR" id="A02444">
    <property type="entry name" value="HBEH"/>
</dbReference>
<dbReference type="SMR" id="P02124"/>
<dbReference type="GO" id="GO:0072562">
    <property type="term" value="C:blood microparticle"/>
    <property type="evidence" value="ECO:0007669"/>
    <property type="project" value="TreeGrafter"/>
</dbReference>
<dbReference type="GO" id="GO:0031838">
    <property type="term" value="C:haptoglobin-hemoglobin complex"/>
    <property type="evidence" value="ECO:0007669"/>
    <property type="project" value="TreeGrafter"/>
</dbReference>
<dbReference type="GO" id="GO:0005833">
    <property type="term" value="C:hemoglobin complex"/>
    <property type="evidence" value="ECO:0007669"/>
    <property type="project" value="InterPro"/>
</dbReference>
<dbReference type="GO" id="GO:0031720">
    <property type="term" value="F:haptoglobin binding"/>
    <property type="evidence" value="ECO:0007669"/>
    <property type="project" value="TreeGrafter"/>
</dbReference>
<dbReference type="GO" id="GO:0020037">
    <property type="term" value="F:heme binding"/>
    <property type="evidence" value="ECO:0007669"/>
    <property type="project" value="InterPro"/>
</dbReference>
<dbReference type="GO" id="GO:0046872">
    <property type="term" value="F:metal ion binding"/>
    <property type="evidence" value="ECO:0007669"/>
    <property type="project" value="UniProtKB-KW"/>
</dbReference>
<dbReference type="GO" id="GO:0043177">
    <property type="term" value="F:organic acid binding"/>
    <property type="evidence" value="ECO:0007669"/>
    <property type="project" value="TreeGrafter"/>
</dbReference>
<dbReference type="GO" id="GO:0019825">
    <property type="term" value="F:oxygen binding"/>
    <property type="evidence" value="ECO:0007669"/>
    <property type="project" value="InterPro"/>
</dbReference>
<dbReference type="GO" id="GO:0005344">
    <property type="term" value="F:oxygen carrier activity"/>
    <property type="evidence" value="ECO:0007669"/>
    <property type="project" value="UniProtKB-KW"/>
</dbReference>
<dbReference type="GO" id="GO:0004601">
    <property type="term" value="F:peroxidase activity"/>
    <property type="evidence" value="ECO:0007669"/>
    <property type="project" value="TreeGrafter"/>
</dbReference>
<dbReference type="GO" id="GO:0042744">
    <property type="term" value="P:hydrogen peroxide catabolic process"/>
    <property type="evidence" value="ECO:0007669"/>
    <property type="project" value="TreeGrafter"/>
</dbReference>
<dbReference type="CDD" id="cd08925">
    <property type="entry name" value="Hb-beta-like"/>
    <property type="match status" value="1"/>
</dbReference>
<dbReference type="FunFam" id="1.10.490.10:FF:000001">
    <property type="entry name" value="Hemoglobin subunit beta"/>
    <property type="match status" value="1"/>
</dbReference>
<dbReference type="Gene3D" id="1.10.490.10">
    <property type="entry name" value="Globins"/>
    <property type="match status" value="1"/>
</dbReference>
<dbReference type="InterPro" id="IPR000971">
    <property type="entry name" value="Globin"/>
</dbReference>
<dbReference type="InterPro" id="IPR009050">
    <property type="entry name" value="Globin-like_sf"/>
</dbReference>
<dbReference type="InterPro" id="IPR012292">
    <property type="entry name" value="Globin/Proto"/>
</dbReference>
<dbReference type="InterPro" id="IPR002337">
    <property type="entry name" value="Hemoglobin_b"/>
</dbReference>
<dbReference type="InterPro" id="IPR050056">
    <property type="entry name" value="Hemoglobin_oxygen_transport"/>
</dbReference>
<dbReference type="PANTHER" id="PTHR11442">
    <property type="entry name" value="HEMOGLOBIN FAMILY MEMBER"/>
    <property type="match status" value="1"/>
</dbReference>
<dbReference type="PANTHER" id="PTHR11442:SF7">
    <property type="entry name" value="HEMOGLOBIN SUBUNIT EPSILON"/>
    <property type="match status" value="1"/>
</dbReference>
<dbReference type="Pfam" id="PF00042">
    <property type="entry name" value="Globin"/>
    <property type="match status" value="1"/>
</dbReference>
<dbReference type="PRINTS" id="PR00814">
    <property type="entry name" value="BETAHAEM"/>
</dbReference>
<dbReference type="SUPFAM" id="SSF46458">
    <property type="entry name" value="Globin-like"/>
    <property type="match status" value="1"/>
</dbReference>
<dbReference type="PROSITE" id="PS01033">
    <property type="entry name" value="GLOBIN"/>
    <property type="match status" value="1"/>
</dbReference>
<proteinExistence type="evidence at protein level"/>
<feature type="chain" id="PRO_0000053092" description="Hemoglobin subunit beta">
    <location>
        <begin position="1"/>
        <end position="146"/>
    </location>
</feature>
<feature type="domain" description="Globin" evidence="1">
    <location>
        <begin position="2"/>
        <end position="146"/>
    </location>
</feature>
<feature type="binding site" description="distal binding residue">
    <location>
        <position position="63"/>
    </location>
    <ligand>
        <name>heme b</name>
        <dbReference type="ChEBI" id="CHEBI:60344"/>
    </ligand>
    <ligandPart>
        <name>Fe</name>
        <dbReference type="ChEBI" id="CHEBI:18248"/>
    </ligandPart>
</feature>
<feature type="binding site" description="proximal binding residue">
    <location>
        <position position="92"/>
    </location>
    <ligand>
        <name>heme b</name>
        <dbReference type="ChEBI" id="CHEBI:60344"/>
    </ligand>
    <ligandPart>
        <name>Fe</name>
        <dbReference type="ChEBI" id="CHEBI:18248"/>
    </ligandPart>
</feature>